<feature type="chain" id="PRO_1000011915" description="Diaminopimelate epimerase">
    <location>
        <begin position="1"/>
        <end position="278"/>
    </location>
</feature>
<feature type="active site" description="Proton donor" evidence="1">
    <location>
        <position position="77"/>
    </location>
</feature>
<feature type="active site" description="Proton acceptor" evidence="1">
    <location>
        <position position="221"/>
    </location>
</feature>
<feature type="binding site" evidence="1">
    <location>
        <position position="13"/>
    </location>
    <ligand>
        <name>substrate</name>
    </ligand>
</feature>
<feature type="binding site" evidence="1">
    <location>
        <position position="49"/>
    </location>
    <ligand>
        <name>substrate</name>
    </ligand>
</feature>
<feature type="binding site" evidence="1">
    <location>
        <position position="68"/>
    </location>
    <ligand>
        <name>substrate</name>
    </ligand>
</feature>
<feature type="binding site" evidence="1">
    <location>
        <begin position="78"/>
        <end position="79"/>
    </location>
    <ligand>
        <name>substrate</name>
    </ligand>
</feature>
<feature type="binding site" evidence="1">
    <location>
        <position position="161"/>
    </location>
    <ligand>
        <name>substrate</name>
    </ligand>
</feature>
<feature type="binding site" evidence="1">
    <location>
        <position position="194"/>
    </location>
    <ligand>
        <name>substrate</name>
    </ligand>
</feature>
<feature type="binding site" evidence="1">
    <location>
        <begin position="212"/>
        <end position="213"/>
    </location>
    <ligand>
        <name>substrate</name>
    </ligand>
</feature>
<feature type="binding site" evidence="1">
    <location>
        <begin position="222"/>
        <end position="223"/>
    </location>
    <ligand>
        <name>substrate</name>
    </ligand>
</feature>
<feature type="site" description="Could be important to modulate the pK values of the two catalytic cysteine residues" evidence="1">
    <location>
        <position position="163"/>
    </location>
</feature>
<feature type="site" description="Could be important to modulate the pK values of the two catalytic cysteine residues" evidence="1">
    <location>
        <position position="212"/>
    </location>
</feature>
<organism>
    <name type="scientific">Nitrosomonas eutropha (strain DSM 101675 / C91 / Nm57)</name>
    <dbReference type="NCBI Taxonomy" id="335283"/>
    <lineage>
        <taxon>Bacteria</taxon>
        <taxon>Pseudomonadati</taxon>
        <taxon>Pseudomonadota</taxon>
        <taxon>Betaproteobacteria</taxon>
        <taxon>Nitrosomonadales</taxon>
        <taxon>Nitrosomonadaceae</taxon>
        <taxon>Nitrosomonas</taxon>
    </lineage>
</organism>
<evidence type="ECO:0000255" key="1">
    <source>
        <dbReference type="HAMAP-Rule" id="MF_00197"/>
    </source>
</evidence>
<comment type="function">
    <text evidence="1">Catalyzes the stereoinversion of LL-2,6-diaminopimelate (L,L-DAP) to meso-diaminopimelate (meso-DAP), a precursor of L-lysine and an essential component of the bacterial peptidoglycan.</text>
</comment>
<comment type="catalytic activity">
    <reaction evidence="1">
        <text>(2S,6S)-2,6-diaminopimelate = meso-2,6-diaminopimelate</text>
        <dbReference type="Rhea" id="RHEA:15393"/>
        <dbReference type="ChEBI" id="CHEBI:57609"/>
        <dbReference type="ChEBI" id="CHEBI:57791"/>
        <dbReference type="EC" id="5.1.1.7"/>
    </reaction>
</comment>
<comment type="pathway">
    <text evidence="1">Amino-acid biosynthesis; L-lysine biosynthesis via DAP pathway; DL-2,6-diaminopimelate from LL-2,6-diaminopimelate: step 1/1.</text>
</comment>
<comment type="subunit">
    <text evidence="1">Homodimer.</text>
</comment>
<comment type="subcellular location">
    <subcellularLocation>
        <location evidence="1">Cytoplasm</location>
    </subcellularLocation>
</comment>
<comment type="similarity">
    <text evidence="1">Belongs to the diaminopimelate epimerase family.</text>
</comment>
<proteinExistence type="inferred from homology"/>
<dbReference type="EC" id="5.1.1.7" evidence="1"/>
<dbReference type="EMBL" id="CP000450">
    <property type="protein sequence ID" value="ABI58781.1"/>
    <property type="molecule type" value="Genomic_DNA"/>
</dbReference>
<dbReference type="RefSeq" id="WP_011633623.1">
    <property type="nucleotide sequence ID" value="NC_008344.1"/>
</dbReference>
<dbReference type="SMR" id="Q0AIP0"/>
<dbReference type="STRING" id="335283.Neut_0505"/>
<dbReference type="KEGG" id="net:Neut_0505"/>
<dbReference type="eggNOG" id="COG0253">
    <property type="taxonomic scope" value="Bacteria"/>
</dbReference>
<dbReference type="HOGENOM" id="CLU_053306_1_1_4"/>
<dbReference type="OrthoDB" id="9805408at2"/>
<dbReference type="UniPathway" id="UPA00034">
    <property type="reaction ID" value="UER00025"/>
</dbReference>
<dbReference type="Proteomes" id="UP000001966">
    <property type="component" value="Chromosome"/>
</dbReference>
<dbReference type="GO" id="GO:0005829">
    <property type="term" value="C:cytosol"/>
    <property type="evidence" value="ECO:0007669"/>
    <property type="project" value="TreeGrafter"/>
</dbReference>
<dbReference type="GO" id="GO:0008837">
    <property type="term" value="F:diaminopimelate epimerase activity"/>
    <property type="evidence" value="ECO:0007669"/>
    <property type="project" value="UniProtKB-UniRule"/>
</dbReference>
<dbReference type="GO" id="GO:0009089">
    <property type="term" value="P:lysine biosynthetic process via diaminopimelate"/>
    <property type="evidence" value="ECO:0007669"/>
    <property type="project" value="UniProtKB-UniRule"/>
</dbReference>
<dbReference type="FunFam" id="3.10.310.10:FF:000001">
    <property type="entry name" value="Diaminopimelate epimerase"/>
    <property type="match status" value="1"/>
</dbReference>
<dbReference type="Gene3D" id="3.10.310.10">
    <property type="entry name" value="Diaminopimelate Epimerase, Chain A, domain 1"/>
    <property type="match status" value="2"/>
</dbReference>
<dbReference type="HAMAP" id="MF_00197">
    <property type="entry name" value="DAP_epimerase"/>
    <property type="match status" value="1"/>
</dbReference>
<dbReference type="InterPro" id="IPR018510">
    <property type="entry name" value="DAP_epimerase_AS"/>
</dbReference>
<dbReference type="InterPro" id="IPR001653">
    <property type="entry name" value="DAP_epimerase_DapF"/>
</dbReference>
<dbReference type="NCBIfam" id="TIGR00652">
    <property type="entry name" value="DapF"/>
    <property type="match status" value="1"/>
</dbReference>
<dbReference type="PANTHER" id="PTHR31689:SF0">
    <property type="entry name" value="DIAMINOPIMELATE EPIMERASE"/>
    <property type="match status" value="1"/>
</dbReference>
<dbReference type="PANTHER" id="PTHR31689">
    <property type="entry name" value="DIAMINOPIMELATE EPIMERASE, CHLOROPLASTIC"/>
    <property type="match status" value="1"/>
</dbReference>
<dbReference type="Pfam" id="PF01678">
    <property type="entry name" value="DAP_epimerase"/>
    <property type="match status" value="2"/>
</dbReference>
<dbReference type="SUPFAM" id="SSF54506">
    <property type="entry name" value="Diaminopimelate epimerase-like"/>
    <property type="match status" value="1"/>
</dbReference>
<dbReference type="PROSITE" id="PS01326">
    <property type="entry name" value="DAP_EPIMERASE"/>
    <property type="match status" value="1"/>
</dbReference>
<reference key="1">
    <citation type="journal article" date="2007" name="Environ. Microbiol.">
        <title>Whole-genome analysis of the ammonia-oxidizing bacterium, Nitrosomonas eutropha C91: implications for niche adaptation.</title>
        <authorList>
            <person name="Stein L.Y."/>
            <person name="Arp D.J."/>
            <person name="Berube P.M."/>
            <person name="Chain P.S."/>
            <person name="Hauser L."/>
            <person name="Jetten M.S."/>
            <person name="Klotz M.G."/>
            <person name="Larimer F.W."/>
            <person name="Norton J.M."/>
            <person name="Op den Camp H.J.M."/>
            <person name="Shin M."/>
            <person name="Wei X."/>
        </authorList>
    </citation>
    <scope>NUCLEOTIDE SEQUENCE [LARGE SCALE GENOMIC DNA]</scope>
    <source>
        <strain>DSM 101675 / C91 / Nm57</strain>
    </source>
</reference>
<gene>
    <name evidence="1" type="primary">dapF</name>
    <name type="ordered locus">Neut_0505</name>
</gene>
<protein>
    <recommendedName>
        <fullName evidence="1">Diaminopimelate epimerase</fullName>
        <shortName evidence="1">DAP epimerase</shortName>
        <ecNumber evidence="1">5.1.1.7</ecNumber>
    </recommendedName>
    <alternativeName>
        <fullName evidence="1">PLP-independent amino acid racemase</fullName>
    </alternativeName>
</protein>
<keyword id="KW-0028">Amino-acid biosynthesis</keyword>
<keyword id="KW-0963">Cytoplasm</keyword>
<keyword id="KW-0413">Isomerase</keyword>
<keyword id="KW-0457">Lysine biosynthesis</keyword>
<sequence length="278" mass="30467">MKLQFTKMHGLGNDFIVINAINQPASLTFLDPATIRRLADRHFGIGFDQLLIVEQAREGGDFRYRIFNADGGEVEQCGNGARCFARFVRDYNLTDKNTIRVETARGIITPTIENNGEVSVNMGVPQFEPAEIPFQAAQRMPVYPLQIGDKTIEISAVSIGNPHAVQIIPDIDLAPVTTEGPKIEAHPLFPERVNAGFMQIIDRAHIRLRVFERGTGETLACGTGACAAVVCGILRGLLDTTVQVAMHGGNLQIRWDGKDKPVWMTGPAITVFEGTIDL</sequence>
<name>DAPF_NITEC</name>
<accession>Q0AIP0</accession>